<name>Y1427_STAEQ</name>
<accession>Q5HN45</accession>
<sequence>MNDKWYRHIIGARTIKTGLATFFTSLFCMLLNLTPIFAILTAIVTIEPTAKASLKKGYKRLPATVIGALFAVVFTYVFGDQSPLSYALSATFTILICTKLNLQVGTTVAVLTSVAMIPGIHEAYVFNFFSRLLTALIGLVTAGLVNFIILPPKYYHQLEEQLALSEKKMYRLFYERCNELLLGKFSSEKTSKELSKLNIIAQKVETLMSYQRDELHYHKNEDNWKLLNRLTNRAYNNRLFISHLSNIIYLPKHTSIAFDANEKIALINISNSINGIIQKGSFARQKKSIATLKSSVKQMDEFDQNQMKSTLIYEILLIYKILDSRYAK</sequence>
<organism>
    <name type="scientific">Staphylococcus epidermidis (strain ATCC 35984 / DSM 28319 / BCRC 17069 / CCUG 31568 / BM 3577 / RP62A)</name>
    <dbReference type="NCBI Taxonomy" id="176279"/>
    <lineage>
        <taxon>Bacteria</taxon>
        <taxon>Bacillati</taxon>
        <taxon>Bacillota</taxon>
        <taxon>Bacilli</taxon>
        <taxon>Bacillales</taxon>
        <taxon>Staphylococcaceae</taxon>
        <taxon>Staphylococcus</taxon>
    </lineage>
</organism>
<proteinExistence type="inferred from homology"/>
<evidence type="ECO:0000255" key="1"/>
<evidence type="ECO:0000305" key="2"/>
<keyword id="KW-1003">Cell membrane</keyword>
<keyword id="KW-0472">Membrane</keyword>
<keyword id="KW-1185">Reference proteome</keyword>
<keyword id="KW-0812">Transmembrane</keyword>
<keyword id="KW-1133">Transmembrane helix</keyword>
<protein>
    <recommendedName>
        <fullName>UPF0421 protein SERP1427</fullName>
    </recommendedName>
</protein>
<gene>
    <name type="ordered locus">SERP1427</name>
</gene>
<dbReference type="EMBL" id="CP000029">
    <property type="protein sequence ID" value="AAW54799.1"/>
    <property type="molecule type" value="Genomic_DNA"/>
</dbReference>
<dbReference type="RefSeq" id="WP_002457091.1">
    <property type="nucleotide sequence ID" value="NC_002976.3"/>
</dbReference>
<dbReference type="SMR" id="Q5HN45"/>
<dbReference type="STRING" id="176279.SERP1427"/>
<dbReference type="KEGG" id="ser:SERP1427"/>
<dbReference type="eggNOG" id="COG4129">
    <property type="taxonomic scope" value="Bacteria"/>
</dbReference>
<dbReference type="HOGENOM" id="CLU_067028_0_0_9"/>
<dbReference type="Proteomes" id="UP000000531">
    <property type="component" value="Chromosome"/>
</dbReference>
<dbReference type="GO" id="GO:0005886">
    <property type="term" value="C:plasma membrane"/>
    <property type="evidence" value="ECO:0007669"/>
    <property type="project" value="UniProtKB-SubCell"/>
</dbReference>
<dbReference type="InterPro" id="IPR010343">
    <property type="entry name" value="ArAE_1"/>
</dbReference>
<dbReference type="PANTHER" id="PTHR30509:SF9">
    <property type="entry name" value="MULTIDRUG RESISTANCE PROTEIN MDTO"/>
    <property type="match status" value="1"/>
</dbReference>
<dbReference type="PANTHER" id="PTHR30509">
    <property type="entry name" value="P-HYDROXYBENZOIC ACID EFFLUX PUMP SUBUNIT-RELATED"/>
    <property type="match status" value="1"/>
</dbReference>
<dbReference type="Pfam" id="PF06081">
    <property type="entry name" value="ArAE_1"/>
    <property type="match status" value="1"/>
</dbReference>
<feature type="chain" id="PRO_0000283023" description="UPF0421 protein SERP1427">
    <location>
        <begin position="1"/>
        <end position="328"/>
    </location>
</feature>
<feature type="transmembrane region" description="Helical" evidence="1">
    <location>
        <begin position="26"/>
        <end position="46"/>
    </location>
</feature>
<feature type="transmembrane region" description="Helical" evidence="1">
    <location>
        <begin position="61"/>
        <end position="81"/>
    </location>
</feature>
<feature type="transmembrane region" description="Helical" evidence="1">
    <location>
        <begin position="109"/>
        <end position="129"/>
    </location>
</feature>
<feature type="transmembrane region" description="Helical" evidence="1">
    <location>
        <begin position="132"/>
        <end position="152"/>
    </location>
</feature>
<comment type="subcellular location">
    <subcellularLocation>
        <location evidence="2">Cell membrane</location>
        <topology evidence="2">Multi-pass membrane protein</topology>
    </subcellularLocation>
</comment>
<comment type="similarity">
    <text evidence="2">Belongs to the UPF0421 family.</text>
</comment>
<reference key="1">
    <citation type="journal article" date="2005" name="J. Bacteriol.">
        <title>Insights on evolution of virulence and resistance from the complete genome analysis of an early methicillin-resistant Staphylococcus aureus strain and a biofilm-producing methicillin-resistant Staphylococcus epidermidis strain.</title>
        <authorList>
            <person name="Gill S.R."/>
            <person name="Fouts D.E."/>
            <person name="Archer G.L."/>
            <person name="Mongodin E.F."/>
            <person name="DeBoy R.T."/>
            <person name="Ravel J."/>
            <person name="Paulsen I.T."/>
            <person name="Kolonay J.F."/>
            <person name="Brinkac L.M."/>
            <person name="Beanan M.J."/>
            <person name="Dodson R.J."/>
            <person name="Daugherty S.C."/>
            <person name="Madupu R."/>
            <person name="Angiuoli S.V."/>
            <person name="Durkin A.S."/>
            <person name="Haft D.H."/>
            <person name="Vamathevan J.J."/>
            <person name="Khouri H."/>
            <person name="Utterback T.R."/>
            <person name="Lee C."/>
            <person name="Dimitrov G."/>
            <person name="Jiang L."/>
            <person name="Qin H."/>
            <person name="Weidman J."/>
            <person name="Tran K."/>
            <person name="Kang K.H."/>
            <person name="Hance I.R."/>
            <person name="Nelson K.E."/>
            <person name="Fraser C.M."/>
        </authorList>
    </citation>
    <scope>NUCLEOTIDE SEQUENCE [LARGE SCALE GENOMIC DNA]</scope>
    <source>
        <strain>ATCC 35984 / DSM 28319 / BCRC 17069 / CCUG 31568 / BM 3577 / RP62A</strain>
    </source>
</reference>